<dbReference type="EMBL" id="X87299">
    <property type="protein sequence ID" value="CAA60732.1"/>
    <property type="molecule type" value="Genomic_DNA"/>
</dbReference>
<dbReference type="EMBL" id="X87299">
    <property type="protein sequence ID" value="CAA60731.1"/>
    <property type="status" value="ALT_INIT"/>
    <property type="molecule type" value="Genomic_DNA"/>
</dbReference>
<dbReference type="PIR" id="S58242">
    <property type="entry name" value="S58242"/>
</dbReference>
<dbReference type="RefSeq" id="WP_003194766.1">
    <property type="nucleotide sequence ID" value="NZ_LS999205.1"/>
</dbReference>
<dbReference type="GeneID" id="97919364"/>
<dbReference type="UniPathway" id="UPA00539"/>
<dbReference type="GO" id="GO:0018189">
    <property type="term" value="P:pyrroloquinoline quinone biosynthetic process"/>
    <property type="evidence" value="ECO:0007669"/>
    <property type="project" value="UniProtKB-UniRule"/>
</dbReference>
<dbReference type="HAMAP" id="MF_00656">
    <property type="entry name" value="PQQ_syn_PqqA"/>
    <property type="match status" value="1"/>
</dbReference>
<dbReference type="InterPro" id="IPR011725">
    <property type="entry name" value="PQQ_synth_PqqA"/>
</dbReference>
<dbReference type="NCBIfam" id="TIGR02107">
    <property type="entry name" value="PQQ_syn_pqqA"/>
    <property type="match status" value="1"/>
</dbReference>
<dbReference type="Pfam" id="PF08042">
    <property type="entry name" value="PqqA"/>
    <property type="match status" value="1"/>
</dbReference>
<organism>
    <name type="scientific">Pseudomonas protegens (strain DSM 19095 / LMG 27888 / CFBP 6595 / CHA0)</name>
    <dbReference type="NCBI Taxonomy" id="1124983"/>
    <lineage>
        <taxon>Bacteria</taxon>
        <taxon>Pseudomonadati</taxon>
        <taxon>Pseudomonadota</taxon>
        <taxon>Gammaproteobacteria</taxon>
        <taxon>Pseudomonadales</taxon>
        <taxon>Pseudomonadaceae</taxon>
        <taxon>Pseudomonas</taxon>
    </lineage>
</organism>
<proteinExistence type="inferred from homology"/>
<reference key="1">
    <citation type="journal article" date="1995" name="Appl. Environ. Microbiol.">
        <title>Tn5-directed cloning of pqq genes from Pseudomonas fluorescens CHA0: mutational inactivation of the genes results in overproduction of the antibiotic pyoluteorin.</title>
        <authorList>
            <person name="Schnider U."/>
            <person name="Keel C."/>
            <person name="Defago G."/>
            <person name="Haas D."/>
        </authorList>
    </citation>
    <scope>NUCLEOTIDE SEQUENCE [GENOMIC DNA]</scope>
    <source>
        <strain>DSM 19095 / LMG 27888 / CFBP 6595 / CHA0</strain>
    </source>
</reference>
<sequence>MTWSKPAYTDLRIGFEVTMYFASR</sequence>
<keyword id="KW-0884">PQQ biosynthesis</keyword>
<accession>P55171</accession>
<protein>
    <recommendedName>
        <fullName>Coenzyme PQQ synthesis protein A</fullName>
    </recommendedName>
    <alternativeName>
        <fullName>Pyrroloquinoline quinone biosynthesis protein A</fullName>
    </alternativeName>
</protein>
<name>PQQA_PSEPH</name>
<evidence type="ECO:0000250" key="1"/>
<evidence type="ECO:0000305" key="2"/>
<gene>
    <name type="primary">pqqA</name>
</gene>
<feature type="chain" id="PRO_0000220314" description="Coenzyme PQQ synthesis protein A">
    <location>
        <begin position="1"/>
        <end position="24"/>
    </location>
</feature>
<feature type="cross-link" description="Pyrroloquinoline quinone (Glu-Tyr)" evidence="1">
    <location>
        <begin position="16"/>
        <end position="20"/>
    </location>
</feature>
<comment type="function">
    <text evidence="1">Required for coenzyme pyrroloquinoline quinone (PQQ) biosynthesis. PQQ is probably formed by cross-linking a specific glutamate to a specific tyrosine residue and excising these residues from the peptide (By similarity).</text>
</comment>
<comment type="pathway">
    <text>Cofactor biosynthesis; pyrroloquinoline quinone biosynthesis.</text>
</comment>
<comment type="similarity">
    <text evidence="2">Belongs to the PqqA family.</text>
</comment>
<comment type="sequence caution" evidence="2">
    <conflict type="erroneous initiation">
        <sequence resource="EMBL-CDS" id="CAA60731"/>
    </conflict>
    <text>Extended N-terminus.</text>
</comment>